<comment type="catalytic activity">
    <reaction>
        <text>succinyl-CoA + glycine + H(+) = 5-aminolevulinate + CO2 + CoA</text>
        <dbReference type="Rhea" id="RHEA:12921"/>
        <dbReference type="ChEBI" id="CHEBI:15378"/>
        <dbReference type="ChEBI" id="CHEBI:16526"/>
        <dbReference type="ChEBI" id="CHEBI:57287"/>
        <dbReference type="ChEBI" id="CHEBI:57292"/>
        <dbReference type="ChEBI" id="CHEBI:57305"/>
        <dbReference type="ChEBI" id="CHEBI:356416"/>
        <dbReference type="EC" id="2.3.1.37"/>
    </reaction>
</comment>
<comment type="cofactor">
    <cofactor evidence="1">
        <name>pyridoxal 5'-phosphate</name>
        <dbReference type="ChEBI" id="CHEBI:597326"/>
    </cofactor>
</comment>
<comment type="pathway">
    <text>Porphyrin-containing compound metabolism; protoporphyrin-IX biosynthesis; 5-aminolevulinate from glycine: step 1/1.</text>
</comment>
<comment type="subunit">
    <text evidence="1">Homodimer.</text>
</comment>
<comment type="similarity">
    <text evidence="2">Belongs to the class-II pyridoxal-phosphate-dependent aminotransferase family.</text>
</comment>
<gene>
    <name type="primary">hemA</name>
    <name type="ordered locus">RHOS4_15770</name>
    <name type="ORF">RSP_2984</name>
</gene>
<keyword id="KW-0012">Acyltransferase</keyword>
<keyword id="KW-0350">Heme biosynthesis</keyword>
<keyword id="KW-0663">Pyridoxal phosphate</keyword>
<keyword id="KW-1185">Reference proteome</keyword>
<keyword id="KW-0808">Transferase</keyword>
<feature type="chain" id="PRO_0000163829" description="5-aminolevulinate synthase 1">
    <location>
        <begin position="1"/>
        <end position="407"/>
    </location>
</feature>
<feature type="active site" evidence="1">
    <location>
        <position position="248"/>
    </location>
</feature>
<feature type="binding site" evidence="1">
    <location>
        <position position="21"/>
    </location>
    <ligand>
        <name>substrate</name>
    </ligand>
</feature>
<feature type="binding site" evidence="1">
    <location>
        <position position="137"/>
    </location>
    <ligand>
        <name>substrate</name>
    </ligand>
</feature>
<feature type="binding site" evidence="1">
    <location>
        <position position="156"/>
    </location>
    <ligand>
        <name>substrate</name>
    </ligand>
</feature>
<feature type="binding site" description="in other chain" evidence="1">
    <location>
        <position position="189"/>
    </location>
    <ligand>
        <name>pyridoxal 5'-phosphate</name>
        <dbReference type="ChEBI" id="CHEBI:597326"/>
        <note>ligand shared between dimeric partners</note>
    </ligand>
</feature>
<feature type="binding site" description="in other chain" evidence="1">
    <location>
        <position position="217"/>
    </location>
    <ligand>
        <name>pyridoxal 5'-phosphate</name>
        <dbReference type="ChEBI" id="CHEBI:597326"/>
        <note>ligand shared between dimeric partners</note>
    </ligand>
</feature>
<feature type="binding site" description="in other chain" evidence="1">
    <location>
        <position position="245"/>
    </location>
    <ligand>
        <name>pyridoxal 5'-phosphate</name>
        <dbReference type="ChEBI" id="CHEBI:597326"/>
        <note>ligand shared between dimeric partners</note>
    </ligand>
</feature>
<feature type="binding site" evidence="1">
    <location>
        <position position="277"/>
    </location>
    <ligand>
        <name>pyridoxal 5'-phosphate</name>
        <dbReference type="ChEBI" id="CHEBI:597326"/>
        <note>ligand shared between dimeric partners</note>
    </ligand>
</feature>
<feature type="binding site" evidence="1">
    <location>
        <position position="278"/>
    </location>
    <ligand>
        <name>pyridoxal 5'-phosphate</name>
        <dbReference type="ChEBI" id="CHEBI:597326"/>
        <note>ligand shared between dimeric partners</note>
    </ligand>
</feature>
<feature type="binding site" evidence="1">
    <location>
        <position position="363"/>
    </location>
    <ligand>
        <name>substrate</name>
    </ligand>
</feature>
<feature type="modified residue" description="N6-(pyridoxal phosphate)lysine" evidence="1">
    <location>
        <position position="248"/>
    </location>
</feature>
<name>HEM1_CERS4</name>
<dbReference type="EC" id="2.3.1.37"/>
<dbReference type="EMBL" id="L07490">
    <property type="protein sequence ID" value="AAA72325.1"/>
    <property type="molecule type" value="Genomic_DNA"/>
</dbReference>
<dbReference type="EMBL" id="CP000143">
    <property type="protein sequence ID" value="ABA79145.1"/>
    <property type="molecule type" value="Genomic_DNA"/>
</dbReference>
<dbReference type="RefSeq" id="WP_011337894.1">
    <property type="nucleotide sequence ID" value="NC_007493.2"/>
</dbReference>
<dbReference type="RefSeq" id="YP_353046.1">
    <property type="nucleotide sequence ID" value="NC_007493.2"/>
</dbReference>
<dbReference type="SMR" id="Q04512"/>
<dbReference type="STRING" id="272943.RSP_2984"/>
<dbReference type="EnsemblBacteria" id="ABA79145">
    <property type="protein sequence ID" value="ABA79145"/>
    <property type="gene ID" value="RSP_2984"/>
</dbReference>
<dbReference type="GeneID" id="3720398"/>
<dbReference type="KEGG" id="rsp:RSP_2984"/>
<dbReference type="PATRIC" id="fig|272943.9.peg.1924"/>
<dbReference type="eggNOG" id="COG0156">
    <property type="taxonomic scope" value="Bacteria"/>
</dbReference>
<dbReference type="OrthoDB" id="9807157at2"/>
<dbReference type="PhylomeDB" id="Q04512"/>
<dbReference type="BRENDA" id="2.3.1.37">
    <property type="organism ID" value="5383"/>
</dbReference>
<dbReference type="UniPathway" id="UPA00251">
    <property type="reaction ID" value="UER00375"/>
</dbReference>
<dbReference type="Proteomes" id="UP000002703">
    <property type="component" value="Chromosome 1"/>
</dbReference>
<dbReference type="GO" id="GO:0003870">
    <property type="term" value="F:5-aminolevulinate synthase activity"/>
    <property type="evidence" value="ECO:0007669"/>
    <property type="project" value="UniProtKB-EC"/>
</dbReference>
<dbReference type="GO" id="GO:0030170">
    <property type="term" value="F:pyridoxal phosphate binding"/>
    <property type="evidence" value="ECO:0007669"/>
    <property type="project" value="InterPro"/>
</dbReference>
<dbReference type="GO" id="GO:0006782">
    <property type="term" value="P:protoporphyrinogen IX biosynthetic process"/>
    <property type="evidence" value="ECO:0007669"/>
    <property type="project" value="UniProtKB-UniPathway"/>
</dbReference>
<dbReference type="CDD" id="cd06454">
    <property type="entry name" value="KBL_like"/>
    <property type="match status" value="1"/>
</dbReference>
<dbReference type="FunFam" id="3.40.640.10:FF:000006">
    <property type="entry name" value="5-aminolevulinate synthase, mitochondrial"/>
    <property type="match status" value="1"/>
</dbReference>
<dbReference type="Gene3D" id="3.90.1150.10">
    <property type="entry name" value="Aspartate Aminotransferase, domain 1"/>
    <property type="match status" value="1"/>
</dbReference>
<dbReference type="Gene3D" id="3.40.640.10">
    <property type="entry name" value="Type I PLP-dependent aspartate aminotransferase-like (Major domain)"/>
    <property type="match status" value="1"/>
</dbReference>
<dbReference type="InterPro" id="IPR010961">
    <property type="entry name" value="4pyrrol_synth_NH2levulA_synth"/>
</dbReference>
<dbReference type="InterPro" id="IPR001917">
    <property type="entry name" value="Aminotrans_II_pyridoxalP_BS"/>
</dbReference>
<dbReference type="InterPro" id="IPR004839">
    <property type="entry name" value="Aminotransferase_I/II_large"/>
</dbReference>
<dbReference type="InterPro" id="IPR050087">
    <property type="entry name" value="AON_synthase_class-II"/>
</dbReference>
<dbReference type="InterPro" id="IPR015424">
    <property type="entry name" value="PyrdxlP-dep_Trfase"/>
</dbReference>
<dbReference type="InterPro" id="IPR015421">
    <property type="entry name" value="PyrdxlP-dep_Trfase_major"/>
</dbReference>
<dbReference type="InterPro" id="IPR015422">
    <property type="entry name" value="PyrdxlP-dep_Trfase_small"/>
</dbReference>
<dbReference type="NCBIfam" id="TIGR01821">
    <property type="entry name" value="5aminolev_synth"/>
    <property type="match status" value="1"/>
</dbReference>
<dbReference type="PANTHER" id="PTHR13693:SF102">
    <property type="entry name" value="2-AMINO-3-KETOBUTYRATE COENZYME A LIGASE, MITOCHONDRIAL"/>
    <property type="match status" value="1"/>
</dbReference>
<dbReference type="PANTHER" id="PTHR13693">
    <property type="entry name" value="CLASS II AMINOTRANSFERASE/8-AMINO-7-OXONONANOATE SYNTHASE"/>
    <property type="match status" value="1"/>
</dbReference>
<dbReference type="Pfam" id="PF00155">
    <property type="entry name" value="Aminotran_1_2"/>
    <property type="match status" value="1"/>
</dbReference>
<dbReference type="SUPFAM" id="SSF53383">
    <property type="entry name" value="PLP-dependent transferases"/>
    <property type="match status" value="1"/>
</dbReference>
<dbReference type="PROSITE" id="PS00599">
    <property type="entry name" value="AA_TRANSFER_CLASS_2"/>
    <property type="match status" value="1"/>
</dbReference>
<organism>
    <name type="scientific">Cereibacter sphaeroides (strain ATCC 17023 / DSM 158 / JCM 6121 / CCUG 31486 / LMG 2827 / NBRC 12203 / NCIMB 8253 / ATH 2.4.1.)</name>
    <name type="common">Rhodobacter sphaeroides</name>
    <dbReference type="NCBI Taxonomy" id="272943"/>
    <lineage>
        <taxon>Bacteria</taxon>
        <taxon>Pseudomonadati</taxon>
        <taxon>Pseudomonadota</taxon>
        <taxon>Alphaproteobacteria</taxon>
        <taxon>Rhodobacterales</taxon>
        <taxon>Paracoccaceae</taxon>
        <taxon>Cereibacter</taxon>
    </lineage>
</organism>
<protein>
    <recommendedName>
        <fullName>5-aminolevulinate synthase 1</fullName>
        <ecNumber>2.3.1.37</ecNumber>
    </recommendedName>
    <alternativeName>
        <fullName>5-aminolevulinic acid synthase</fullName>
    </alternativeName>
    <alternativeName>
        <fullName>Delta-ALA synthase</fullName>
    </alternativeName>
    <alternativeName>
        <fullName>Delta-aminolevulinate synthase</fullName>
    </alternativeName>
</protein>
<sequence length="407" mass="44616">MDYNLALDTALNRLHTEGRYRTFIDIERRKGAFPKAMWRKPDGSEKEITVWCGNDYLGMGQHPVVLGAMHEALDSTGAGSGGTRNISGTTLYHKRLEAELADLHGKEAALVFSSAYIANDATLSTLPQLIPGLVIVSDKLNHASMIEGIRRSGTEKHIFKHNDLDDLRRILTSIGKDRPILVAFESVYSMDGDFGRIEEICDIADEFGALKYIDEVHAVGMYGPRGGGVAERDGLMDRIDIINGTLGKAYGVFGGYIAASSKMCDAVRSYAPGFIFSTSLPPVVAAGAAASVRHLKGDVELREKHQTQARILKMRLKGLGLPIIDHGSHIVPVHVGDPVHCKMISDMLLEHFGIYVQPINFPTVPRGTERLRFTPSPVHDSGMIDHLVKAMDVLWQHCALNRAEVVA</sequence>
<reference key="1">
    <citation type="journal article" date="1993" name="J. Bacteriol.">
        <title>Expression of the Rhodobacter sphaeroides hemA and hemT genes, encoding two 5-aminolevulinic acid synthase isozymes.</title>
        <authorList>
            <person name="Neidle E.L."/>
            <person name="Kaplan S."/>
        </authorList>
    </citation>
    <scope>NUCLEOTIDE SEQUENCE [GENOMIC DNA]</scope>
</reference>
<reference key="2">
    <citation type="submission" date="2005-09" db="EMBL/GenBank/DDBJ databases">
        <title>Complete sequence of chromosome 1 of Rhodobacter sphaeroides 2.4.1.</title>
        <authorList>
            <person name="Copeland A."/>
            <person name="Lucas S."/>
            <person name="Lapidus A."/>
            <person name="Barry K."/>
            <person name="Detter J.C."/>
            <person name="Glavina T."/>
            <person name="Hammon N."/>
            <person name="Israni S."/>
            <person name="Pitluck S."/>
            <person name="Richardson P."/>
            <person name="Mackenzie C."/>
            <person name="Choudhary M."/>
            <person name="Larimer F."/>
            <person name="Hauser L.J."/>
            <person name="Land M."/>
            <person name="Donohue T.J."/>
            <person name="Kaplan S."/>
        </authorList>
    </citation>
    <scope>NUCLEOTIDE SEQUENCE [LARGE SCALE GENOMIC DNA]</scope>
    <source>
        <strain>ATCC 17023 / DSM 158 / JCM 6121 / CCUG 31486 / LMG 2827 / NBRC 12203 / NCIMB 8253 / ATH 2.4.1.</strain>
    </source>
</reference>
<accession>Q04512</accession>
<accession>Q3J239</accession>
<evidence type="ECO:0000250" key="1">
    <source>
        <dbReference type="UniProtKB" id="P18079"/>
    </source>
</evidence>
<evidence type="ECO:0000305" key="2"/>
<proteinExistence type="inferred from homology"/>